<sequence>MSFLKTSDPAVYNAIMQETTRLKETIDLIASENYTSKAVLEAQGSVFTNKYAEGYPGKRYYAGCEYADAIEELAIDRAKTLFHAEHANVQPHSGAQANMAAYFAMVKPGDTIMGLTLSHGGHLTHGSKANFTGKLYHVIEYGLNAETERIDYDNLEKLALEHRPRLIVTGASAYPRILDFERFRAICDKVDAKLMVDIAHIAGLVAAGLHPSPVPYADVVTSTSHKTLRGPRGGFILCKEQYAKAIDQAVFPVIQGGPLMQVVAAKAVAFQEAMQPGFVTYQKKILENTQVMAEELRKLGLRLVSGGTDNHLVLVDLSPIGVNGYDAQLALRRAGIVINRNTVPFAENQTANVPAGIRLGCPAATSRGFGPAEIRQTVSWIGKILKNIGNEDIEKQVLAEVIHLCRKFPVPGIDA</sequence>
<name>GLYA_DEHM1</name>
<accession>Q3Z9B9</accession>
<evidence type="ECO:0000255" key="1">
    <source>
        <dbReference type="HAMAP-Rule" id="MF_00051"/>
    </source>
</evidence>
<feature type="chain" id="PRO_0000234973" description="Serine hydroxymethyltransferase">
    <location>
        <begin position="1"/>
        <end position="415"/>
    </location>
</feature>
<feature type="binding site" evidence="1">
    <location>
        <position position="117"/>
    </location>
    <ligand>
        <name>(6S)-5,6,7,8-tetrahydrofolate</name>
        <dbReference type="ChEBI" id="CHEBI:57453"/>
    </ligand>
</feature>
<feature type="binding site" evidence="1">
    <location>
        <begin position="121"/>
        <end position="123"/>
    </location>
    <ligand>
        <name>(6S)-5,6,7,8-tetrahydrofolate</name>
        <dbReference type="ChEBI" id="CHEBI:57453"/>
    </ligand>
</feature>
<feature type="site" description="Plays an important role in substrate specificity" evidence="1">
    <location>
        <position position="225"/>
    </location>
</feature>
<feature type="modified residue" description="N6-(pyridoxal phosphate)lysine" evidence="1">
    <location>
        <position position="226"/>
    </location>
</feature>
<dbReference type="EC" id="2.1.2.1" evidence="1"/>
<dbReference type="EMBL" id="CP000027">
    <property type="protein sequence ID" value="AAW40267.1"/>
    <property type="molecule type" value="Genomic_DNA"/>
</dbReference>
<dbReference type="RefSeq" id="WP_010936213.1">
    <property type="nucleotide sequence ID" value="NC_002936.3"/>
</dbReference>
<dbReference type="SMR" id="Q3Z9B9"/>
<dbReference type="FunCoup" id="Q3Z9B9">
    <property type="interactions" value="330"/>
</dbReference>
<dbReference type="STRING" id="243164.DET0436"/>
<dbReference type="GeneID" id="3230231"/>
<dbReference type="KEGG" id="det:DET0436"/>
<dbReference type="PATRIC" id="fig|243164.10.peg.414"/>
<dbReference type="eggNOG" id="COG0112">
    <property type="taxonomic scope" value="Bacteria"/>
</dbReference>
<dbReference type="HOGENOM" id="CLU_022477_2_1_0"/>
<dbReference type="InParanoid" id="Q3Z9B9"/>
<dbReference type="UniPathway" id="UPA00193"/>
<dbReference type="UniPathway" id="UPA00288">
    <property type="reaction ID" value="UER01023"/>
</dbReference>
<dbReference type="Proteomes" id="UP000008289">
    <property type="component" value="Chromosome"/>
</dbReference>
<dbReference type="GO" id="GO:0005829">
    <property type="term" value="C:cytosol"/>
    <property type="evidence" value="ECO:0007669"/>
    <property type="project" value="TreeGrafter"/>
</dbReference>
<dbReference type="GO" id="GO:0004372">
    <property type="term" value="F:glycine hydroxymethyltransferase activity"/>
    <property type="evidence" value="ECO:0007669"/>
    <property type="project" value="UniProtKB-UniRule"/>
</dbReference>
<dbReference type="GO" id="GO:0030170">
    <property type="term" value="F:pyridoxal phosphate binding"/>
    <property type="evidence" value="ECO:0007669"/>
    <property type="project" value="UniProtKB-UniRule"/>
</dbReference>
<dbReference type="GO" id="GO:0019264">
    <property type="term" value="P:glycine biosynthetic process from serine"/>
    <property type="evidence" value="ECO:0007669"/>
    <property type="project" value="UniProtKB-UniRule"/>
</dbReference>
<dbReference type="GO" id="GO:0035999">
    <property type="term" value="P:tetrahydrofolate interconversion"/>
    <property type="evidence" value="ECO:0007669"/>
    <property type="project" value="UniProtKB-UniRule"/>
</dbReference>
<dbReference type="CDD" id="cd00378">
    <property type="entry name" value="SHMT"/>
    <property type="match status" value="1"/>
</dbReference>
<dbReference type="FunFam" id="3.40.640.10:FF:000001">
    <property type="entry name" value="Serine hydroxymethyltransferase"/>
    <property type="match status" value="1"/>
</dbReference>
<dbReference type="Gene3D" id="3.90.1150.10">
    <property type="entry name" value="Aspartate Aminotransferase, domain 1"/>
    <property type="match status" value="1"/>
</dbReference>
<dbReference type="Gene3D" id="3.40.640.10">
    <property type="entry name" value="Type I PLP-dependent aspartate aminotransferase-like (Major domain)"/>
    <property type="match status" value="1"/>
</dbReference>
<dbReference type="HAMAP" id="MF_00051">
    <property type="entry name" value="SHMT"/>
    <property type="match status" value="1"/>
</dbReference>
<dbReference type="InterPro" id="IPR015424">
    <property type="entry name" value="PyrdxlP-dep_Trfase"/>
</dbReference>
<dbReference type="InterPro" id="IPR015421">
    <property type="entry name" value="PyrdxlP-dep_Trfase_major"/>
</dbReference>
<dbReference type="InterPro" id="IPR015422">
    <property type="entry name" value="PyrdxlP-dep_Trfase_small"/>
</dbReference>
<dbReference type="InterPro" id="IPR001085">
    <property type="entry name" value="Ser_HO-MeTrfase"/>
</dbReference>
<dbReference type="InterPro" id="IPR049943">
    <property type="entry name" value="Ser_HO-MeTrfase-like"/>
</dbReference>
<dbReference type="InterPro" id="IPR019798">
    <property type="entry name" value="Ser_HO-MeTrfase_PLP_BS"/>
</dbReference>
<dbReference type="InterPro" id="IPR039429">
    <property type="entry name" value="SHMT-like_dom"/>
</dbReference>
<dbReference type="NCBIfam" id="NF000586">
    <property type="entry name" value="PRK00011.1"/>
    <property type="match status" value="1"/>
</dbReference>
<dbReference type="PANTHER" id="PTHR11680">
    <property type="entry name" value="SERINE HYDROXYMETHYLTRANSFERASE"/>
    <property type="match status" value="1"/>
</dbReference>
<dbReference type="PANTHER" id="PTHR11680:SF35">
    <property type="entry name" value="SERINE HYDROXYMETHYLTRANSFERASE 1"/>
    <property type="match status" value="1"/>
</dbReference>
<dbReference type="Pfam" id="PF00464">
    <property type="entry name" value="SHMT"/>
    <property type="match status" value="1"/>
</dbReference>
<dbReference type="PIRSF" id="PIRSF000412">
    <property type="entry name" value="SHMT"/>
    <property type="match status" value="1"/>
</dbReference>
<dbReference type="SUPFAM" id="SSF53383">
    <property type="entry name" value="PLP-dependent transferases"/>
    <property type="match status" value="1"/>
</dbReference>
<dbReference type="PROSITE" id="PS00096">
    <property type="entry name" value="SHMT"/>
    <property type="match status" value="1"/>
</dbReference>
<keyword id="KW-0028">Amino-acid biosynthesis</keyword>
<keyword id="KW-0963">Cytoplasm</keyword>
<keyword id="KW-0554">One-carbon metabolism</keyword>
<keyword id="KW-0663">Pyridoxal phosphate</keyword>
<keyword id="KW-0808">Transferase</keyword>
<proteinExistence type="inferred from homology"/>
<gene>
    <name evidence="1" type="primary">glyA</name>
    <name type="ordered locus">DET0436</name>
</gene>
<comment type="function">
    <text evidence="1">Catalyzes the reversible interconversion of serine and glycine with tetrahydrofolate (THF) serving as the one-carbon carrier. This reaction serves as the major source of one-carbon groups required for the biosynthesis of purines, thymidylate, methionine, and other important biomolecules. Also exhibits THF-independent aldolase activity toward beta-hydroxyamino acids, producing glycine and aldehydes, via a retro-aldol mechanism.</text>
</comment>
<comment type="catalytic activity">
    <reaction evidence="1">
        <text>(6R)-5,10-methylene-5,6,7,8-tetrahydrofolate + glycine + H2O = (6S)-5,6,7,8-tetrahydrofolate + L-serine</text>
        <dbReference type="Rhea" id="RHEA:15481"/>
        <dbReference type="ChEBI" id="CHEBI:15377"/>
        <dbReference type="ChEBI" id="CHEBI:15636"/>
        <dbReference type="ChEBI" id="CHEBI:33384"/>
        <dbReference type="ChEBI" id="CHEBI:57305"/>
        <dbReference type="ChEBI" id="CHEBI:57453"/>
        <dbReference type="EC" id="2.1.2.1"/>
    </reaction>
</comment>
<comment type="cofactor">
    <cofactor evidence="1">
        <name>pyridoxal 5'-phosphate</name>
        <dbReference type="ChEBI" id="CHEBI:597326"/>
    </cofactor>
</comment>
<comment type="pathway">
    <text evidence="1">One-carbon metabolism; tetrahydrofolate interconversion.</text>
</comment>
<comment type="pathway">
    <text evidence="1">Amino-acid biosynthesis; glycine biosynthesis; glycine from L-serine: step 1/1.</text>
</comment>
<comment type="subunit">
    <text evidence="1">Homodimer.</text>
</comment>
<comment type="subcellular location">
    <subcellularLocation>
        <location evidence="1">Cytoplasm</location>
    </subcellularLocation>
</comment>
<comment type="similarity">
    <text evidence="1">Belongs to the SHMT family.</text>
</comment>
<protein>
    <recommendedName>
        <fullName evidence="1">Serine hydroxymethyltransferase</fullName>
        <shortName evidence="1">SHMT</shortName>
        <shortName evidence="1">Serine methylase</shortName>
        <ecNumber evidence="1">2.1.2.1</ecNumber>
    </recommendedName>
</protein>
<organism>
    <name type="scientific">Dehalococcoides mccartyi (strain ATCC BAA-2266 / KCTC 15142 / 195)</name>
    <name type="common">Dehalococcoides ethenogenes (strain 195)</name>
    <dbReference type="NCBI Taxonomy" id="243164"/>
    <lineage>
        <taxon>Bacteria</taxon>
        <taxon>Bacillati</taxon>
        <taxon>Chloroflexota</taxon>
        <taxon>Dehalococcoidia</taxon>
        <taxon>Dehalococcoidales</taxon>
        <taxon>Dehalococcoidaceae</taxon>
        <taxon>Dehalococcoides</taxon>
    </lineage>
</organism>
<reference key="1">
    <citation type="journal article" date="2005" name="Science">
        <title>Genome sequence of the PCE-dechlorinating bacterium Dehalococcoides ethenogenes.</title>
        <authorList>
            <person name="Seshadri R."/>
            <person name="Adrian L."/>
            <person name="Fouts D.E."/>
            <person name="Eisen J.A."/>
            <person name="Phillippy A.M."/>
            <person name="Methe B.A."/>
            <person name="Ward N.L."/>
            <person name="Nelson W.C."/>
            <person name="DeBoy R.T."/>
            <person name="Khouri H.M."/>
            <person name="Kolonay J.F."/>
            <person name="Dodson R.J."/>
            <person name="Daugherty S.C."/>
            <person name="Brinkac L.M."/>
            <person name="Sullivan S.A."/>
            <person name="Madupu R."/>
            <person name="Nelson K.E."/>
            <person name="Kang K.H."/>
            <person name="Impraim M."/>
            <person name="Tran K."/>
            <person name="Robinson J.M."/>
            <person name="Forberger H.A."/>
            <person name="Fraser C.M."/>
            <person name="Zinder S.H."/>
            <person name="Heidelberg J.F."/>
        </authorList>
    </citation>
    <scope>NUCLEOTIDE SEQUENCE [LARGE SCALE GENOMIC DNA]</scope>
    <source>
        <strain>ATCC BAA-2266 / KCTC 15142 / 195</strain>
    </source>
</reference>